<organism>
    <name type="scientific">Caldicellulosiruptor bescii (strain ATCC BAA-1888 / DSM 6725 / KCTC 15123 / Z-1320)</name>
    <name type="common">Anaerocellum thermophilum</name>
    <dbReference type="NCBI Taxonomy" id="521460"/>
    <lineage>
        <taxon>Bacteria</taxon>
        <taxon>Bacillati</taxon>
        <taxon>Bacillota</taxon>
        <taxon>Bacillota incertae sedis</taxon>
        <taxon>Caldicellulosiruptorales</taxon>
        <taxon>Caldicellulosiruptoraceae</taxon>
        <taxon>Caldicellulosiruptor</taxon>
    </lineage>
</organism>
<accession>B9MS47</accession>
<evidence type="ECO:0000255" key="1">
    <source>
        <dbReference type="HAMAP-Rule" id="MF_00318"/>
    </source>
</evidence>
<feature type="chain" id="PRO_1000132979" description="Enolase">
    <location>
        <begin position="1"/>
        <end position="434"/>
    </location>
</feature>
<feature type="active site" description="Proton donor" evidence="1">
    <location>
        <position position="208"/>
    </location>
</feature>
<feature type="active site" description="Proton acceptor" evidence="1">
    <location>
        <position position="342"/>
    </location>
</feature>
<feature type="binding site" evidence="1">
    <location>
        <position position="166"/>
    </location>
    <ligand>
        <name>(2R)-2-phosphoglycerate</name>
        <dbReference type="ChEBI" id="CHEBI:58289"/>
    </ligand>
</feature>
<feature type="binding site" evidence="1">
    <location>
        <position position="245"/>
    </location>
    <ligand>
        <name>Mg(2+)</name>
        <dbReference type="ChEBI" id="CHEBI:18420"/>
    </ligand>
</feature>
<feature type="binding site" evidence="1">
    <location>
        <position position="290"/>
    </location>
    <ligand>
        <name>Mg(2+)</name>
        <dbReference type="ChEBI" id="CHEBI:18420"/>
    </ligand>
</feature>
<feature type="binding site" evidence="1">
    <location>
        <position position="317"/>
    </location>
    <ligand>
        <name>Mg(2+)</name>
        <dbReference type="ChEBI" id="CHEBI:18420"/>
    </ligand>
</feature>
<feature type="binding site" evidence="1">
    <location>
        <position position="342"/>
    </location>
    <ligand>
        <name>(2R)-2-phosphoglycerate</name>
        <dbReference type="ChEBI" id="CHEBI:58289"/>
    </ligand>
</feature>
<feature type="binding site" evidence="1">
    <location>
        <position position="371"/>
    </location>
    <ligand>
        <name>(2R)-2-phosphoglycerate</name>
        <dbReference type="ChEBI" id="CHEBI:58289"/>
    </ligand>
</feature>
<feature type="binding site" evidence="1">
    <location>
        <position position="372"/>
    </location>
    <ligand>
        <name>(2R)-2-phosphoglycerate</name>
        <dbReference type="ChEBI" id="CHEBI:58289"/>
    </ligand>
</feature>
<feature type="binding site" evidence="1">
    <location>
        <position position="393"/>
    </location>
    <ligand>
        <name>(2R)-2-phosphoglycerate</name>
        <dbReference type="ChEBI" id="CHEBI:58289"/>
    </ligand>
</feature>
<comment type="function">
    <text evidence="1">Catalyzes the reversible conversion of 2-phosphoglycerate (2-PG) into phosphoenolpyruvate (PEP). It is essential for the degradation of carbohydrates via glycolysis.</text>
</comment>
<comment type="catalytic activity">
    <reaction evidence="1">
        <text>(2R)-2-phosphoglycerate = phosphoenolpyruvate + H2O</text>
        <dbReference type="Rhea" id="RHEA:10164"/>
        <dbReference type="ChEBI" id="CHEBI:15377"/>
        <dbReference type="ChEBI" id="CHEBI:58289"/>
        <dbReference type="ChEBI" id="CHEBI:58702"/>
        <dbReference type="EC" id="4.2.1.11"/>
    </reaction>
</comment>
<comment type="cofactor">
    <cofactor evidence="1">
        <name>Mg(2+)</name>
        <dbReference type="ChEBI" id="CHEBI:18420"/>
    </cofactor>
    <text evidence="1">Binds a second Mg(2+) ion via substrate during catalysis.</text>
</comment>
<comment type="pathway">
    <text evidence="1">Carbohydrate degradation; glycolysis; pyruvate from D-glyceraldehyde 3-phosphate: step 4/5.</text>
</comment>
<comment type="subcellular location">
    <subcellularLocation>
        <location evidence="1">Cytoplasm</location>
    </subcellularLocation>
    <subcellularLocation>
        <location evidence="1">Secreted</location>
    </subcellularLocation>
    <subcellularLocation>
        <location evidence="1">Cell surface</location>
    </subcellularLocation>
    <text evidence="1">Fractions of enolase are present in both the cytoplasm and on the cell surface.</text>
</comment>
<comment type="similarity">
    <text evidence="1">Belongs to the enolase family.</text>
</comment>
<reference key="1">
    <citation type="submission" date="2009-01" db="EMBL/GenBank/DDBJ databases">
        <title>Complete sequence of chromosome of Caldicellulosiruptor becscii DSM 6725.</title>
        <authorList>
            <person name="Lucas S."/>
            <person name="Copeland A."/>
            <person name="Lapidus A."/>
            <person name="Glavina del Rio T."/>
            <person name="Tice H."/>
            <person name="Bruce D."/>
            <person name="Goodwin L."/>
            <person name="Pitluck S."/>
            <person name="Sims D."/>
            <person name="Meincke L."/>
            <person name="Brettin T."/>
            <person name="Detter J.C."/>
            <person name="Han C."/>
            <person name="Larimer F."/>
            <person name="Land M."/>
            <person name="Hauser L."/>
            <person name="Kyrpides N."/>
            <person name="Ovchinnikova G."/>
            <person name="Kataeva I."/>
            <person name="Adams M.W.W."/>
        </authorList>
    </citation>
    <scope>NUCLEOTIDE SEQUENCE [LARGE SCALE GENOMIC DNA]</scope>
    <source>
        <strain>ATCC BAA-1888 / DSM 6725 / KCTC 15123 / Z-1320</strain>
    </source>
</reference>
<dbReference type="EC" id="4.2.1.11" evidence="1"/>
<dbReference type="EMBL" id="CP001393">
    <property type="protein sequence ID" value="ACM60501.1"/>
    <property type="molecule type" value="Genomic_DNA"/>
</dbReference>
<dbReference type="RefSeq" id="WP_015907869.1">
    <property type="nucleotide sequence ID" value="NC_012034.1"/>
</dbReference>
<dbReference type="SMR" id="B9MS47"/>
<dbReference type="STRING" id="521460.Athe_1403"/>
<dbReference type="GeneID" id="31772749"/>
<dbReference type="KEGG" id="ate:Athe_1403"/>
<dbReference type="eggNOG" id="COG0148">
    <property type="taxonomic scope" value="Bacteria"/>
</dbReference>
<dbReference type="HOGENOM" id="CLU_031223_2_1_9"/>
<dbReference type="UniPathway" id="UPA00109">
    <property type="reaction ID" value="UER00187"/>
</dbReference>
<dbReference type="Proteomes" id="UP000007723">
    <property type="component" value="Chromosome"/>
</dbReference>
<dbReference type="GO" id="GO:0009986">
    <property type="term" value="C:cell surface"/>
    <property type="evidence" value="ECO:0007669"/>
    <property type="project" value="UniProtKB-SubCell"/>
</dbReference>
<dbReference type="GO" id="GO:0005576">
    <property type="term" value="C:extracellular region"/>
    <property type="evidence" value="ECO:0007669"/>
    <property type="project" value="UniProtKB-SubCell"/>
</dbReference>
<dbReference type="GO" id="GO:0000015">
    <property type="term" value="C:phosphopyruvate hydratase complex"/>
    <property type="evidence" value="ECO:0007669"/>
    <property type="project" value="InterPro"/>
</dbReference>
<dbReference type="GO" id="GO:0000287">
    <property type="term" value="F:magnesium ion binding"/>
    <property type="evidence" value="ECO:0007669"/>
    <property type="project" value="UniProtKB-UniRule"/>
</dbReference>
<dbReference type="GO" id="GO:0004634">
    <property type="term" value="F:phosphopyruvate hydratase activity"/>
    <property type="evidence" value="ECO:0007669"/>
    <property type="project" value="UniProtKB-UniRule"/>
</dbReference>
<dbReference type="GO" id="GO:0006096">
    <property type="term" value="P:glycolytic process"/>
    <property type="evidence" value="ECO:0007669"/>
    <property type="project" value="UniProtKB-UniRule"/>
</dbReference>
<dbReference type="CDD" id="cd03313">
    <property type="entry name" value="enolase"/>
    <property type="match status" value="1"/>
</dbReference>
<dbReference type="FunFam" id="3.20.20.120:FF:000001">
    <property type="entry name" value="Enolase"/>
    <property type="match status" value="1"/>
</dbReference>
<dbReference type="FunFam" id="3.30.390.10:FF:000001">
    <property type="entry name" value="Enolase"/>
    <property type="match status" value="1"/>
</dbReference>
<dbReference type="Gene3D" id="3.20.20.120">
    <property type="entry name" value="Enolase-like C-terminal domain"/>
    <property type="match status" value="1"/>
</dbReference>
<dbReference type="Gene3D" id="3.30.390.10">
    <property type="entry name" value="Enolase-like, N-terminal domain"/>
    <property type="match status" value="1"/>
</dbReference>
<dbReference type="HAMAP" id="MF_00318">
    <property type="entry name" value="Enolase"/>
    <property type="match status" value="1"/>
</dbReference>
<dbReference type="InterPro" id="IPR000941">
    <property type="entry name" value="Enolase"/>
</dbReference>
<dbReference type="InterPro" id="IPR036849">
    <property type="entry name" value="Enolase-like_C_sf"/>
</dbReference>
<dbReference type="InterPro" id="IPR029017">
    <property type="entry name" value="Enolase-like_N"/>
</dbReference>
<dbReference type="InterPro" id="IPR020810">
    <property type="entry name" value="Enolase_C"/>
</dbReference>
<dbReference type="InterPro" id="IPR020809">
    <property type="entry name" value="Enolase_CS"/>
</dbReference>
<dbReference type="InterPro" id="IPR020811">
    <property type="entry name" value="Enolase_N"/>
</dbReference>
<dbReference type="NCBIfam" id="TIGR01060">
    <property type="entry name" value="eno"/>
    <property type="match status" value="1"/>
</dbReference>
<dbReference type="PANTHER" id="PTHR11902">
    <property type="entry name" value="ENOLASE"/>
    <property type="match status" value="1"/>
</dbReference>
<dbReference type="PANTHER" id="PTHR11902:SF1">
    <property type="entry name" value="ENOLASE"/>
    <property type="match status" value="1"/>
</dbReference>
<dbReference type="Pfam" id="PF00113">
    <property type="entry name" value="Enolase_C"/>
    <property type="match status" value="1"/>
</dbReference>
<dbReference type="Pfam" id="PF03952">
    <property type="entry name" value="Enolase_N"/>
    <property type="match status" value="1"/>
</dbReference>
<dbReference type="PIRSF" id="PIRSF001400">
    <property type="entry name" value="Enolase"/>
    <property type="match status" value="1"/>
</dbReference>
<dbReference type="PRINTS" id="PR00148">
    <property type="entry name" value="ENOLASE"/>
</dbReference>
<dbReference type="SFLD" id="SFLDF00002">
    <property type="entry name" value="enolase"/>
    <property type="match status" value="1"/>
</dbReference>
<dbReference type="SFLD" id="SFLDG00178">
    <property type="entry name" value="enolase"/>
    <property type="match status" value="1"/>
</dbReference>
<dbReference type="SMART" id="SM01192">
    <property type="entry name" value="Enolase_C"/>
    <property type="match status" value="1"/>
</dbReference>
<dbReference type="SMART" id="SM01193">
    <property type="entry name" value="Enolase_N"/>
    <property type="match status" value="1"/>
</dbReference>
<dbReference type="SUPFAM" id="SSF51604">
    <property type="entry name" value="Enolase C-terminal domain-like"/>
    <property type="match status" value="1"/>
</dbReference>
<dbReference type="SUPFAM" id="SSF54826">
    <property type="entry name" value="Enolase N-terminal domain-like"/>
    <property type="match status" value="1"/>
</dbReference>
<dbReference type="PROSITE" id="PS00164">
    <property type="entry name" value="ENOLASE"/>
    <property type="match status" value="1"/>
</dbReference>
<gene>
    <name evidence="1" type="primary">eno</name>
    <name type="ordered locus">Athe_1403</name>
</gene>
<keyword id="KW-0963">Cytoplasm</keyword>
<keyword id="KW-0324">Glycolysis</keyword>
<keyword id="KW-0456">Lyase</keyword>
<keyword id="KW-0460">Magnesium</keyword>
<keyword id="KW-0479">Metal-binding</keyword>
<keyword id="KW-0964">Secreted</keyword>
<sequence>MKVDLSITAVKAREILDSRGNPTVEVEVVVNDEFVGRAAVPSGASTGIFEAVELRDGDKKRYMGKGVLKAVENVNEVIAPEIIGMNALNQVEIDKLMIELDGTENKSKLGANAILGVSLAVAKAAANALGLPLYQYIGGVNAKYLPVPMMNILNGGKHADNSVDLQEFMIMPVGAKSFSEALRMCAETFHHLRNVLKARGYNTTVGDEGGFAPNLKSNEEPLEVIVEAIEKAGYTPGKDIAIALDPATSELYNEEDGKYYFEREGKVRTKEEMVEFWVKLVEKYPIVSIEDGVAEEDWEGWKMLTEALGNKIQLVGDDLFVTNTKRLAKGIELGVANSILIKLNQIGTLTETLEAIEMANRAGYTAVVSHRSGETEDTTIADLVVAVNAGQIKTGAPSRTDRVAKYNQLLRIEEELGSVAVYPGMNAFFNLKKK</sequence>
<protein>
    <recommendedName>
        <fullName evidence="1">Enolase</fullName>
        <ecNumber evidence="1">4.2.1.11</ecNumber>
    </recommendedName>
    <alternativeName>
        <fullName evidence="1">2-phospho-D-glycerate hydro-lyase</fullName>
    </alternativeName>
    <alternativeName>
        <fullName evidence="1">2-phosphoglycerate dehydratase</fullName>
    </alternativeName>
</protein>
<name>ENO_CALBD</name>
<proteinExistence type="inferred from homology"/>